<evidence type="ECO:0000255" key="1">
    <source>
        <dbReference type="HAMAP-Rule" id="MF_01343"/>
    </source>
</evidence>
<evidence type="ECO:0000256" key="2">
    <source>
        <dbReference type="SAM" id="MobiDB-lite"/>
    </source>
</evidence>
<evidence type="ECO:0000305" key="3"/>
<organism>
    <name type="scientific">Aeropyrum pernix (strain ATCC 700893 / DSM 11879 / JCM 9820 / NBRC 100138 / K1)</name>
    <dbReference type="NCBI Taxonomy" id="272557"/>
    <lineage>
        <taxon>Archaea</taxon>
        <taxon>Thermoproteota</taxon>
        <taxon>Thermoprotei</taxon>
        <taxon>Desulfurococcales</taxon>
        <taxon>Desulfurococcaceae</taxon>
        <taxon>Aeropyrum</taxon>
    </lineage>
</organism>
<sequence length="150" mass="17302">MNKRREKGQSHSTRPPHPQPPQWLVFTPEEIELLIAELAKKGYGPSMIGIILRDQYGIPLVKPILGKGVSEVLREKGLHPPLPEDLLMLIRKAVNLRRHLDEHPKDYHAKKGLIDLESKIRRLVKYYKRRGVLPPDWKYDPEAAKLLVST</sequence>
<proteinExistence type="inferred from homology"/>
<gene>
    <name evidence="1" type="primary">rps15</name>
    <name type="ordered locus">APE_1139</name>
</gene>
<feature type="chain" id="PRO_0000115601" description="Small ribosomal subunit protein uS15">
    <location>
        <begin position="1"/>
        <end position="150"/>
    </location>
</feature>
<feature type="region of interest" description="Disordered" evidence="2">
    <location>
        <begin position="1"/>
        <end position="22"/>
    </location>
</feature>
<protein>
    <recommendedName>
        <fullName evidence="1">Small ribosomal subunit protein uS15</fullName>
    </recommendedName>
    <alternativeName>
        <fullName evidence="3">30S ribosomal protein S15</fullName>
    </alternativeName>
</protein>
<reference key="1">
    <citation type="journal article" date="1999" name="DNA Res.">
        <title>Complete genome sequence of an aerobic hyper-thermophilic crenarchaeon, Aeropyrum pernix K1.</title>
        <authorList>
            <person name="Kawarabayasi Y."/>
            <person name="Hino Y."/>
            <person name="Horikawa H."/>
            <person name="Yamazaki S."/>
            <person name="Haikawa Y."/>
            <person name="Jin-no K."/>
            <person name="Takahashi M."/>
            <person name="Sekine M."/>
            <person name="Baba S."/>
            <person name="Ankai A."/>
            <person name="Kosugi H."/>
            <person name="Hosoyama A."/>
            <person name="Fukui S."/>
            <person name="Nagai Y."/>
            <person name="Nishijima K."/>
            <person name="Nakazawa H."/>
            <person name="Takamiya M."/>
            <person name="Masuda S."/>
            <person name="Funahashi T."/>
            <person name="Tanaka T."/>
            <person name="Kudoh Y."/>
            <person name="Yamazaki J."/>
            <person name="Kushida N."/>
            <person name="Oguchi A."/>
            <person name="Aoki K."/>
            <person name="Kubota K."/>
            <person name="Nakamura Y."/>
            <person name="Nomura N."/>
            <person name="Sako Y."/>
            <person name="Kikuchi H."/>
        </authorList>
    </citation>
    <scope>NUCLEOTIDE SEQUENCE [LARGE SCALE GENOMIC DNA]</scope>
    <source>
        <strain>ATCC 700893 / DSM 11879 / JCM 9820 / NBRC 100138 / K1</strain>
    </source>
</reference>
<dbReference type="EMBL" id="BA000002">
    <property type="protein sequence ID" value="BAA80124.1"/>
    <property type="molecule type" value="Genomic_DNA"/>
</dbReference>
<dbReference type="PIR" id="D72715">
    <property type="entry name" value="D72715"/>
</dbReference>
<dbReference type="RefSeq" id="WP_010866188.1">
    <property type="nucleotide sequence ID" value="NC_000854.2"/>
</dbReference>
<dbReference type="SMR" id="Q9YCX3"/>
<dbReference type="STRING" id="272557.APE_1139"/>
<dbReference type="EnsemblBacteria" id="BAA80124">
    <property type="protein sequence ID" value="BAA80124"/>
    <property type="gene ID" value="APE_1139"/>
</dbReference>
<dbReference type="GeneID" id="1445810"/>
<dbReference type="KEGG" id="ape:APE_1139"/>
<dbReference type="PATRIC" id="fig|272557.25.peg.787"/>
<dbReference type="eggNOG" id="arCOG04185">
    <property type="taxonomic scope" value="Archaea"/>
</dbReference>
<dbReference type="Proteomes" id="UP000002518">
    <property type="component" value="Chromosome"/>
</dbReference>
<dbReference type="GO" id="GO:0022627">
    <property type="term" value="C:cytosolic small ribosomal subunit"/>
    <property type="evidence" value="ECO:0007669"/>
    <property type="project" value="TreeGrafter"/>
</dbReference>
<dbReference type="GO" id="GO:0070181">
    <property type="term" value="F:small ribosomal subunit rRNA binding"/>
    <property type="evidence" value="ECO:0007669"/>
    <property type="project" value="TreeGrafter"/>
</dbReference>
<dbReference type="GO" id="GO:0003735">
    <property type="term" value="F:structural constituent of ribosome"/>
    <property type="evidence" value="ECO:0007669"/>
    <property type="project" value="InterPro"/>
</dbReference>
<dbReference type="GO" id="GO:0006412">
    <property type="term" value="P:translation"/>
    <property type="evidence" value="ECO:0007669"/>
    <property type="project" value="UniProtKB-UniRule"/>
</dbReference>
<dbReference type="CDD" id="cd00353">
    <property type="entry name" value="Ribosomal_S15p_S13e"/>
    <property type="match status" value="1"/>
</dbReference>
<dbReference type="FunFam" id="1.10.287.10:FF:000003">
    <property type="entry name" value="40S ribosomal protein S13"/>
    <property type="match status" value="1"/>
</dbReference>
<dbReference type="Gene3D" id="4.10.860.130">
    <property type="match status" value="1"/>
</dbReference>
<dbReference type="Gene3D" id="1.10.287.10">
    <property type="entry name" value="S15/NS1, RNA-binding"/>
    <property type="match status" value="1"/>
</dbReference>
<dbReference type="HAMAP" id="MF_01343_A">
    <property type="entry name" value="Ribosomal_uS15_A"/>
    <property type="match status" value="1"/>
</dbReference>
<dbReference type="InterPro" id="IPR000589">
    <property type="entry name" value="Ribosomal_uS15"/>
</dbReference>
<dbReference type="InterPro" id="IPR023029">
    <property type="entry name" value="Ribosomal_uS15_arc_euk"/>
</dbReference>
<dbReference type="InterPro" id="IPR012606">
    <property type="entry name" value="Ribosomal_uS15_N"/>
</dbReference>
<dbReference type="InterPro" id="IPR009068">
    <property type="entry name" value="uS15_NS1_RNA-bd_sf"/>
</dbReference>
<dbReference type="NCBIfam" id="NF006331">
    <property type="entry name" value="PRK08561.1"/>
    <property type="match status" value="1"/>
</dbReference>
<dbReference type="PANTHER" id="PTHR11885">
    <property type="entry name" value="RIBOSOMAL PROTEIN S15P/S13E"/>
    <property type="match status" value="1"/>
</dbReference>
<dbReference type="PANTHER" id="PTHR11885:SF6">
    <property type="entry name" value="SMALL RIBOSOMAL SUBUNIT PROTEIN US15"/>
    <property type="match status" value="1"/>
</dbReference>
<dbReference type="Pfam" id="PF08069">
    <property type="entry name" value="Ribosomal_S13_N"/>
    <property type="match status" value="1"/>
</dbReference>
<dbReference type="Pfam" id="PF00312">
    <property type="entry name" value="Ribosomal_S15"/>
    <property type="match status" value="1"/>
</dbReference>
<dbReference type="SMART" id="SM01386">
    <property type="entry name" value="Ribosomal_S13_N"/>
    <property type="match status" value="1"/>
</dbReference>
<dbReference type="SMART" id="SM01387">
    <property type="entry name" value="Ribosomal_S15"/>
    <property type="match status" value="1"/>
</dbReference>
<dbReference type="SUPFAM" id="SSF47060">
    <property type="entry name" value="S15/NS1 RNA-binding domain"/>
    <property type="match status" value="1"/>
</dbReference>
<dbReference type="PROSITE" id="PS00362">
    <property type="entry name" value="RIBOSOMAL_S15"/>
    <property type="match status" value="1"/>
</dbReference>
<keyword id="KW-1185">Reference proteome</keyword>
<keyword id="KW-0687">Ribonucleoprotein</keyword>
<keyword id="KW-0689">Ribosomal protein</keyword>
<accession>Q9YCX3</accession>
<comment type="subunit">
    <text evidence="1">Part of the 30S ribosomal subunit.</text>
</comment>
<comment type="similarity">
    <text evidence="1">Belongs to the universal ribosomal protein uS15 family.</text>
</comment>
<name>RS15_AERPE</name>